<gene>
    <name type="primary">ABCG6</name>
    <name type="synonym">WBC6</name>
    <name type="ordered locus">At5g13580</name>
    <name type="ORF">MSH12.4</name>
</gene>
<accession>Q9FNB5</accession>
<keyword id="KW-0067">ATP-binding</keyword>
<keyword id="KW-0472">Membrane</keyword>
<keyword id="KW-0547">Nucleotide-binding</keyword>
<keyword id="KW-1185">Reference proteome</keyword>
<keyword id="KW-0812">Transmembrane</keyword>
<keyword id="KW-1133">Transmembrane helix</keyword>
<keyword id="KW-0813">Transport</keyword>
<sequence>MSRVVAADDNMALPFFSPEFGNVSGASSSPTTFAQLLQNVDDSTRRSHHQHHVDVDLASPDQSVPFVLSFTDLTYSVKVRRKFTWRRSVSSDPGAPSEGIFSSKTKTLLNGITGEARDGEILAVLGASGSGKSTLIDALANRIAKGSLKGNVTLNGEVLNSKMQKAISAYVMQDDLLFPMLTVEETLMFAAEFRLPRSLSKSKKSLRVQALIDQLGLRNAANTVIGDEGHRGISGGERRRVSIGIDIIHDPILLFLDEPTSGLDSTSALSVIKVLKRIAQSGSMVIMTLHQPSYRLLRLLDRLLFLSRGQTVFSGSPAMLPRFFAEFGHPIPEHENRTEFALDLIRELEGSAGGTRSLVEFNKGFRQRKAEPRSQTGLSLKEAISASISKGKLVSGATTTTHSSGSSPVSTIPTFANPFWVELAVLAKRSMTNSRRQPELFGIRLGAVLVTGFILATMFWQLDNSPKGVQERLGCFAFAMSTTFYTCADALPVFLQERFIFMRETAYNAYRRSSYVLSHSLVALPSLIILSLAFAAITFWGVGLDGGLMGFLFYFLVILASFWAGSSFVTFLSGVVPHVMLGYTIVVAILAYFLLFSGFFINRDRIPGYWIWFHYISLVKYPYEAVLLNEFGDPTKCFVRGVQIFDNTPLVAVPQGMKVRLLATMSKSLGMRITSSTCLTTGYDILQQQGVTDLTKWNCLWVTVAWGFFFRILFYFSLLLGSKNKRR</sequence>
<reference key="1">
    <citation type="journal article" date="1997" name="DNA Res.">
        <title>Structural analysis of Arabidopsis thaliana chromosome 5. II. Sequence features of the regions of 1,044,062 bp covered by thirteen physically assigned P1 clones.</title>
        <authorList>
            <person name="Kotani H."/>
            <person name="Nakamura Y."/>
            <person name="Sato S."/>
            <person name="Kaneko T."/>
            <person name="Asamizu E."/>
            <person name="Miyajima N."/>
            <person name="Tabata S."/>
        </authorList>
    </citation>
    <scope>NUCLEOTIDE SEQUENCE [LARGE SCALE GENOMIC DNA]</scope>
    <source>
        <strain>cv. Columbia</strain>
    </source>
</reference>
<reference key="2">
    <citation type="journal article" date="2017" name="Plant J.">
        <title>Araport11: a complete reannotation of the Arabidopsis thaliana reference genome.</title>
        <authorList>
            <person name="Cheng C.Y."/>
            <person name="Krishnakumar V."/>
            <person name="Chan A.P."/>
            <person name="Thibaud-Nissen F."/>
            <person name="Schobel S."/>
            <person name="Town C.D."/>
        </authorList>
    </citation>
    <scope>GENOME REANNOTATION</scope>
    <source>
        <strain>cv. Columbia</strain>
    </source>
</reference>
<reference key="3">
    <citation type="journal article" date="2003" name="Science">
        <title>Empirical analysis of transcriptional activity in the Arabidopsis genome.</title>
        <authorList>
            <person name="Yamada K."/>
            <person name="Lim J."/>
            <person name="Dale J.M."/>
            <person name="Chen H."/>
            <person name="Shinn P."/>
            <person name="Palm C.J."/>
            <person name="Southwick A.M."/>
            <person name="Wu H.C."/>
            <person name="Kim C.J."/>
            <person name="Nguyen M."/>
            <person name="Pham P.K."/>
            <person name="Cheuk R.F."/>
            <person name="Karlin-Newmann G."/>
            <person name="Liu S.X."/>
            <person name="Lam B."/>
            <person name="Sakano H."/>
            <person name="Wu T."/>
            <person name="Yu G."/>
            <person name="Miranda M."/>
            <person name="Quach H.L."/>
            <person name="Tripp M."/>
            <person name="Chang C.H."/>
            <person name="Lee J.M."/>
            <person name="Toriumi M.J."/>
            <person name="Chan M.M."/>
            <person name="Tang C.C."/>
            <person name="Onodera C.S."/>
            <person name="Deng J.M."/>
            <person name="Akiyama K."/>
            <person name="Ansari Y."/>
            <person name="Arakawa T."/>
            <person name="Banh J."/>
            <person name="Banno F."/>
            <person name="Bowser L."/>
            <person name="Brooks S.Y."/>
            <person name="Carninci P."/>
            <person name="Chao Q."/>
            <person name="Choy N."/>
            <person name="Enju A."/>
            <person name="Goldsmith A.D."/>
            <person name="Gurjal M."/>
            <person name="Hansen N.F."/>
            <person name="Hayashizaki Y."/>
            <person name="Johnson-Hopson C."/>
            <person name="Hsuan V.W."/>
            <person name="Iida K."/>
            <person name="Karnes M."/>
            <person name="Khan S."/>
            <person name="Koesema E."/>
            <person name="Ishida J."/>
            <person name="Jiang P.X."/>
            <person name="Jones T."/>
            <person name="Kawai J."/>
            <person name="Kamiya A."/>
            <person name="Meyers C."/>
            <person name="Nakajima M."/>
            <person name="Narusaka M."/>
            <person name="Seki M."/>
            <person name="Sakurai T."/>
            <person name="Satou M."/>
            <person name="Tamse R."/>
            <person name="Vaysberg M."/>
            <person name="Wallender E.K."/>
            <person name="Wong C."/>
            <person name="Yamamura Y."/>
            <person name="Yuan S."/>
            <person name="Shinozaki K."/>
            <person name="Davis R.W."/>
            <person name="Theologis A."/>
            <person name="Ecker J.R."/>
        </authorList>
    </citation>
    <scope>NUCLEOTIDE SEQUENCE [LARGE SCALE MRNA]</scope>
    <source>
        <strain>cv. Columbia</strain>
    </source>
</reference>
<reference key="4">
    <citation type="journal article" date="2001" name="J. Biol. Chem.">
        <title>The Arabidopsis thaliana ABC protein superfamily, a complete inventory.</title>
        <authorList>
            <person name="Sanchez-Fernandez R."/>
            <person name="Davies T.G."/>
            <person name="Coleman J.O."/>
            <person name="Rea P.A."/>
        </authorList>
    </citation>
    <scope>GENE FAMILY</scope>
    <scope>NOMENCLATURE</scope>
</reference>
<reference key="5">
    <citation type="journal article" date="2008" name="Trends Plant Sci.">
        <title>Plant ABC proteins - a unified nomenclature and updated inventory.</title>
        <authorList>
            <person name="Verrier P.J."/>
            <person name="Bird D."/>
            <person name="Burla B."/>
            <person name="Dassa E."/>
            <person name="Forestier C."/>
            <person name="Geisler M."/>
            <person name="Klein M."/>
            <person name="Kolukisaoglu H.U."/>
            <person name="Lee Y."/>
            <person name="Martinoia E."/>
            <person name="Murphy A."/>
            <person name="Rea P.A."/>
            <person name="Samuels L."/>
            <person name="Schulz B."/>
            <person name="Spalding E.J."/>
            <person name="Yazaki K."/>
            <person name="Theodoulou F.L."/>
        </authorList>
    </citation>
    <scope>GENE FAMILY</scope>
    <scope>NOMENCLATURE</scope>
</reference>
<organism>
    <name type="scientific">Arabidopsis thaliana</name>
    <name type="common">Mouse-ear cress</name>
    <dbReference type="NCBI Taxonomy" id="3702"/>
    <lineage>
        <taxon>Eukaryota</taxon>
        <taxon>Viridiplantae</taxon>
        <taxon>Streptophyta</taxon>
        <taxon>Embryophyta</taxon>
        <taxon>Tracheophyta</taxon>
        <taxon>Spermatophyta</taxon>
        <taxon>Magnoliopsida</taxon>
        <taxon>eudicotyledons</taxon>
        <taxon>Gunneridae</taxon>
        <taxon>Pentapetalae</taxon>
        <taxon>rosids</taxon>
        <taxon>malvids</taxon>
        <taxon>Brassicales</taxon>
        <taxon>Brassicaceae</taxon>
        <taxon>Camelineae</taxon>
        <taxon>Arabidopsis</taxon>
    </lineage>
</organism>
<dbReference type="EMBL" id="AB006704">
    <property type="protein sequence ID" value="BAB08684.1"/>
    <property type="molecule type" value="Genomic_DNA"/>
</dbReference>
<dbReference type="EMBL" id="CP002688">
    <property type="protein sequence ID" value="AED91914.1"/>
    <property type="molecule type" value="Genomic_DNA"/>
</dbReference>
<dbReference type="EMBL" id="BT003884">
    <property type="protein sequence ID" value="AAO41933.1"/>
    <property type="molecule type" value="mRNA"/>
</dbReference>
<dbReference type="EMBL" id="BT004956">
    <property type="protein sequence ID" value="AAO50489.1"/>
    <property type="molecule type" value="mRNA"/>
</dbReference>
<dbReference type="RefSeq" id="NP_196862.1">
    <property type="nucleotide sequence ID" value="NM_121361.3"/>
</dbReference>
<dbReference type="SMR" id="Q9FNB5"/>
<dbReference type="BioGRID" id="16480">
    <property type="interactions" value="14"/>
</dbReference>
<dbReference type="FunCoup" id="Q9FNB5">
    <property type="interactions" value="66"/>
</dbReference>
<dbReference type="IntAct" id="Q9FNB5">
    <property type="interactions" value="13"/>
</dbReference>
<dbReference type="STRING" id="3702.Q9FNB5"/>
<dbReference type="TCDB" id="3.A.1.204.31">
    <property type="family name" value="the atp-binding cassette (abc) superfamily"/>
</dbReference>
<dbReference type="iPTMnet" id="Q9FNB5"/>
<dbReference type="PaxDb" id="3702-AT5G13580.1"/>
<dbReference type="ProteomicsDB" id="244614"/>
<dbReference type="EnsemblPlants" id="AT5G13580.1">
    <property type="protein sequence ID" value="AT5G13580.1"/>
    <property type="gene ID" value="AT5G13580"/>
</dbReference>
<dbReference type="GeneID" id="831202"/>
<dbReference type="Gramene" id="AT5G13580.1">
    <property type="protein sequence ID" value="AT5G13580.1"/>
    <property type="gene ID" value="AT5G13580"/>
</dbReference>
<dbReference type="KEGG" id="ath:AT5G13580"/>
<dbReference type="Araport" id="AT5G13580"/>
<dbReference type="TAIR" id="AT5G13580">
    <property type="gene designation" value="ABCG6"/>
</dbReference>
<dbReference type="eggNOG" id="KOG0061">
    <property type="taxonomic scope" value="Eukaryota"/>
</dbReference>
<dbReference type="HOGENOM" id="CLU_000604_57_8_1"/>
<dbReference type="InParanoid" id="Q9FNB5"/>
<dbReference type="OMA" id="AGQMCTG"/>
<dbReference type="OrthoDB" id="66620at2759"/>
<dbReference type="PhylomeDB" id="Q9FNB5"/>
<dbReference type="PRO" id="PR:Q9FNB5"/>
<dbReference type="Proteomes" id="UP000006548">
    <property type="component" value="Chromosome 5"/>
</dbReference>
<dbReference type="ExpressionAtlas" id="Q9FNB5">
    <property type="expression patterns" value="baseline and differential"/>
</dbReference>
<dbReference type="GO" id="GO:0016020">
    <property type="term" value="C:membrane"/>
    <property type="evidence" value="ECO:0007669"/>
    <property type="project" value="UniProtKB-SubCell"/>
</dbReference>
<dbReference type="GO" id="GO:0140359">
    <property type="term" value="F:ABC-type transporter activity"/>
    <property type="evidence" value="ECO:0007669"/>
    <property type="project" value="InterPro"/>
</dbReference>
<dbReference type="GO" id="GO:0005524">
    <property type="term" value="F:ATP binding"/>
    <property type="evidence" value="ECO:0007669"/>
    <property type="project" value="UniProtKB-KW"/>
</dbReference>
<dbReference type="GO" id="GO:0016887">
    <property type="term" value="F:ATP hydrolysis activity"/>
    <property type="evidence" value="ECO:0007669"/>
    <property type="project" value="InterPro"/>
</dbReference>
<dbReference type="GO" id="GO:1903825">
    <property type="term" value="P:organic acid transmembrane transport"/>
    <property type="evidence" value="ECO:0000314"/>
    <property type="project" value="TAIR"/>
</dbReference>
<dbReference type="GO" id="GO:0009624">
    <property type="term" value="P:response to nematode"/>
    <property type="evidence" value="ECO:0007007"/>
    <property type="project" value="TAIR"/>
</dbReference>
<dbReference type="GO" id="GO:0010345">
    <property type="term" value="P:suberin biosynthetic process"/>
    <property type="evidence" value="ECO:0000316"/>
    <property type="project" value="TAIR"/>
</dbReference>
<dbReference type="FunFam" id="3.40.50.300:FF:000530">
    <property type="entry name" value="ABC transporter G family member 6"/>
    <property type="match status" value="1"/>
</dbReference>
<dbReference type="Gene3D" id="3.40.50.300">
    <property type="entry name" value="P-loop containing nucleotide triphosphate hydrolases"/>
    <property type="match status" value="1"/>
</dbReference>
<dbReference type="InterPro" id="IPR003593">
    <property type="entry name" value="AAA+_ATPase"/>
</dbReference>
<dbReference type="InterPro" id="IPR013525">
    <property type="entry name" value="ABC2_TM"/>
</dbReference>
<dbReference type="InterPro" id="IPR003439">
    <property type="entry name" value="ABC_transporter-like_ATP-bd"/>
</dbReference>
<dbReference type="InterPro" id="IPR017871">
    <property type="entry name" value="ABC_transporter-like_CS"/>
</dbReference>
<dbReference type="InterPro" id="IPR043926">
    <property type="entry name" value="ABCG_dom"/>
</dbReference>
<dbReference type="InterPro" id="IPR050352">
    <property type="entry name" value="ABCG_transporters"/>
</dbReference>
<dbReference type="InterPro" id="IPR027417">
    <property type="entry name" value="P-loop_NTPase"/>
</dbReference>
<dbReference type="PANTHER" id="PTHR48041">
    <property type="entry name" value="ABC TRANSPORTER G FAMILY MEMBER 28"/>
    <property type="match status" value="1"/>
</dbReference>
<dbReference type="PANTHER" id="PTHR48041:SF83">
    <property type="entry name" value="ABC TRANSPORTER G FAMILY MEMBER 6"/>
    <property type="match status" value="1"/>
</dbReference>
<dbReference type="Pfam" id="PF01061">
    <property type="entry name" value="ABC2_membrane"/>
    <property type="match status" value="1"/>
</dbReference>
<dbReference type="Pfam" id="PF19055">
    <property type="entry name" value="ABC2_membrane_7"/>
    <property type="match status" value="1"/>
</dbReference>
<dbReference type="Pfam" id="PF00005">
    <property type="entry name" value="ABC_tran"/>
    <property type="match status" value="1"/>
</dbReference>
<dbReference type="SMART" id="SM00382">
    <property type="entry name" value="AAA"/>
    <property type="match status" value="1"/>
</dbReference>
<dbReference type="SUPFAM" id="SSF52540">
    <property type="entry name" value="P-loop containing nucleoside triphosphate hydrolases"/>
    <property type="match status" value="1"/>
</dbReference>
<dbReference type="PROSITE" id="PS00211">
    <property type="entry name" value="ABC_TRANSPORTER_1"/>
    <property type="match status" value="1"/>
</dbReference>
<dbReference type="PROSITE" id="PS50893">
    <property type="entry name" value="ABC_TRANSPORTER_2"/>
    <property type="match status" value="1"/>
</dbReference>
<evidence type="ECO:0000250" key="1"/>
<evidence type="ECO:0000255" key="2"/>
<evidence type="ECO:0000255" key="3">
    <source>
        <dbReference type="PROSITE-ProRule" id="PRU00434"/>
    </source>
</evidence>
<evidence type="ECO:0000305" key="4"/>
<proteinExistence type="evidence at transcript level"/>
<comment type="subcellular location">
    <subcellularLocation>
        <location evidence="1">Membrane</location>
        <topology evidence="1">Multi-pass membrane protein</topology>
    </subcellularLocation>
</comment>
<comment type="similarity">
    <text evidence="4">Belongs to the ABC transporter superfamily. ABCG family. Eye pigment precursor importer (TC 3.A.1.204) subfamily.</text>
</comment>
<name>AB6G_ARATH</name>
<protein>
    <recommendedName>
        <fullName>ABC transporter G family member 6</fullName>
        <shortName>ABC transporter ABCG.6</shortName>
        <shortName>AtABCG6</shortName>
    </recommendedName>
    <alternativeName>
        <fullName>White-brown complex homolog protein 6</fullName>
        <shortName>AtWBC6</shortName>
    </alternativeName>
</protein>
<feature type="chain" id="PRO_0000240678" description="ABC transporter G family member 6">
    <location>
        <begin position="1"/>
        <end position="727"/>
    </location>
</feature>
<feature type="transmembrane region" description="Helical" evidence="2">
    <location>
        <begin position="440"/>
        <end position="460"/>
    </location>
</feature>
<feature type="transmembrane region" description="Helical" evidence="2">
    <location>
        <begin position="475"/>
        <end position="495"/>
    </location>
</feature>
<feature type="transmembrane region" description="Helical" evidence="2">
    <location>
        <begin position="517"/>
        <end position="537"/>
    </location>
</feature>
<feature type="transmembrane region" description="Helical" evidence="2">
    <location>
        <begin position="560"/>
        <end position="580"/>
    </location>
</feature>
<feature type="transmembrane region" description="Helical" evidence="2">
    <location>
        <begin position="581"/>
        <end position="601"/>
    </location>
</feature>
<feature type="transmembrane region" description="Helical" evidence="2">
    <location>
        <begin position="700"/>
        <end position="720"/>
    </location>
</feature>
<feature type="domain" description="ABC transporter" evidence="3">
    <location>
        <begin position="68"/>
        <end position="333"/>
    </location>
</feature>
<feature type="domain" description="ABC transmembrane type-2">
    <location>
        <begin position="421"/>
        <end position="631"/>
    </location>
</feature>
<feature type="binding site" evidence="3">
    <location>
        <begin position="126"/>
        <end position="133"/>
    </location>
    <ligand>
        <name>ATP</name>
        <dbReference type="ChEBI" id="CHEBI:30616"/>
    </ligand>
</feature>